<protein>
    <recommendedName>
        <fullName evidence="1">2-succinyl-5-enolpyruvyl-6-hydroxy-3-cyclohexene-1-carboxylate synthase</fullName>
        <shortName evidence="1">SEPHCHC synthase</shortName>
        <ecNumber evidence="1">2.2.1.9</ecNumber>
    </recommendedName>
</protein>
<proteinExistence type="inferred from homology"/>
<dbReference type="EC" id="2.2.1.9" evidence="1"/>
<dbReference type="EMBL" id="CP000393">
    <property type="protein sequence ID" value="ABG53086.1"/>
    <property type="molecule type" value="Genomic_DNA"/>
</dbReference>
<dbReference type="RefSeq" id="WP_011613416.1">
    <property type="nucleotide sequence ID" value="NC_008312.1"/>
</dbReference>
<dbReference type="SMR" id="Q10XD8"/>
<dbReference type="STRING" id="203124.Tery_4077"/>
<dbReference type="KEGG" id="ter:Tery_4077"/>
<dbReference type="eggNOG" id="COG1165">
    <property type="taxonomic scope" value="Bacteria"/>
</dbReference>
<dbReference type="HOGENOM" id="CLU_006051_3_0_3"/>
<dbReference type="OrthoDB" id="9791859at2"/>
<dbReference type="UniPathway" id="UPA00995"/>
<dbReference type="UniPathway" id="UPA01057">
    <property type="reaction ID" value="UER00164"/>
</dbReference>
<dbReference type="GO" id="GO:0070204">
    <property type="term" value="F:2-succinyl-5-enolpyruvyl-6-hydroxy-3-cyclohexene-1-carboxylic-acid synthase activity"/>
    <property type="evidence" value="ECO:0007669"/>
    <property type="project" value="UniProtKB-UniRule"/>
</dbReference>
<dbReference type="GO" id="GO:0000287">
    <property type="term" value="F:magnesium ion binding"/>
    <property type="evidence" value="ECO:0007669"/>
    <property type="project" value="UniProtKB-UniRule"/>
</dbReference>
<dbReference type="GO" id="GO:0030145">
    <property type="term" value="F:manganese ion binding"/>
    <property type="evidence" value="ECO:0007669"/>
    <property type="project" value="UniProtKB-UniRule"/>
</dbReference>
<dbReference type="GO" id="GO:0030976">
    <property type="term" value="F:thiamine pyrophosphate binding"/>
    <property type="evidence" value="ECO:0007669"/>
    <property type="project" value="UniProtKB-UniRule"/>
</dbReference>
<dbReference type="GO" id="GO:0009234">
    <property type="term" value="P:menaquinone biosynthetic process"/>
    <property type="evidence" value="ECO:0007669"/>
    <property type="project" value="InterPro"/>
</dbReference>
<dbReference type="GO" id="GO:0042372">
    <property type="term" value="P:phylloquinone biosynthetic process"/>
    <property type="evidence" value="ECO:0007669"/>
    <property type="project" value="UniProtKB-UniRule"/>
</dbReference>
<dbReference type="CDD" id="cd07037">
    <property type="entry name" value="TPP_PYR_MenD"/>
    <property type="match status" value="1"/>
</dbReference>
<dbReference type="CDD" id="cd02009">
    <property type="entry name" value="TPP_SHCHC_synthase"/>
    <property type="match status" value="1"/>
</dbReference>
<dbReference type="Gene3D" id="3.40.50.970">
    <property type="match status" value="2"/>
</dbReference>
<dbReference type="Gene3D" id="3.40.50.1220">
    <property type="entry name" value="TPP-binding domain"/>
    <property type="match status" value="1"/>
</dbReference>
<dbReference type="HAMAP" id="MF_01659">
    <property type="entry name" value="MenD"/>
    <property type="match status" value="1"/>
</dbReference>
<dbReference type="InterPro" id="IPR004433">
    <property type="entry name" value="MenaQ_synth_MenD"/>
</dbReference>
<dbReference type="InterPro" id="IPR032264">
    <property type="entry name" value="MenD_middle"/>
</dbReference>
<dbReference type="InterPro" id="IPR029061">
    <property type="entry name" value="THDP-binding"/>
</dbReference>
<dbReference type="InterPro" id="IPR012001">
    <property type="entry name" value="Thiamin_PyroP_enz_TPP-bd_dom"/>
</dbReference>
<dbReference type="InterPro" id="IPR011766">
    <property type="entry name" value="TPP_enzyme_TPP-bd"/>
</dbReference>
<dbReference type="NCBIfam" id="TIGR00173">
    <property type="entry name" value="menD"/>
    <property type="match status" value="1"/>
</dbReference>
<dbReference type="PANTHER" id="PTHR42916">
    <property type="entry name" value="2-SUCCINYL-5-ENOLPYRUVYL-6-HYDROXY-3-CYCLOHEXENE-1-CARBOXYLATE SYNTHASE"/>
    <property type="match status" value="1"/>
</dbReference>
<dbReference type="PANTHER" id="PTHR42916:SF1">
    <property type="entry name" value="PROTEIN PHYLLO, CHLOROPLASTIC"/>
    <property type="match status" value="1"/>
</dbReference>
<dbReference type="Pfam" id="PF02775">
    <property type="entry name" value="TPP_enzyme_C"/>
    <property type="match status" value="1"/>
</dbReference>
<dbReference type="Pfam" id="PF16582">
    <property type="entry name" value="TPP_enzyme_M_2"/>
    <property type="match status" value="1"/>
</dbReference>
<dbReference type="Pfam" id="PF02776">
    <property type="entry name" value="TPP_enzyme_N"/>
    <property type="match status" value="1"/>
</dbReference>
<dbReference type="PIRSF" id="PIRSF004983">
    <property type="entry name" value="MenD"/>
    <property type="match status" value="1"/>
</dbReference>
<dbReference type="SUPFAM" id="SSF52518">
    <property type="entry name" value="Thiamin diphosphate-binding fold (THDP-binding)"/>
    <property type="match status" value="2"/>
</dbReference>
<accession>Q10XD8</accession>
<feature type="chain" id="PRO_0000341881" description="2-succinyl-5-enolpyruvyl-6-hydroxy-3-cyclohexene-1-carboxylate synthase">
    <location>
        <begin position="1"/>
        <end position="582"/>
    </location>
</feature>
<comment type="function">
    <text evidence="1">Catalyzes the thiamine diphosphate-dependent decarboxylation of 2-oxoglutarate and the subsequent addition of the resulting succinic semialdehyde-thiamine pyrophosphate anion to isochorismate to yield 2-succinyl-5-enolpyruvyl-6-hydroxy-3-cyclohexene-1-carboxylate (SEPHCHC).</text>
</comment>
<comment type="catalytic activity">
    <reaction evidence="1">
        <text>isochorismate + 2-oxoglutarate + H(+) = 5-enolpyruvoyl-6-hydroxy-2-succinyl-cyclohex-3-ene-1-carboxylate + CO2</text>
        <dbReference type="Rhea" id="RHEA:25593"/>
        <dbReference type="ChEBI" id="CHEBI:15378"/>
        <dbReference type="ChEBI" id="CHEBI:16526"/>
        <dbReference type="ChEBI" id="CHEBI:16810"/>
        <dbReference type="ChEBI" id="CHEBI:29780"/>
        <dbReference type="ChEBI" id="CHEBI:58818"/>
        <dbReference type="EC" id="2.2.1.9"/>
    </reaction>
</comment>
<comment type="cofactor">
    <cofactor evidence="1">
        <name>Mg(2+)</name>
        <dbReference type="ChEBI" id="CHEBI:18420"/>
    </cofactor>
    <cofactor evidence="1">
        <name>Mn(2+)</name>
        <dbReference type="ChEBI" id="CHEBI:29035"/>
    </cofactor>
</comment>
<comment type="cofactor">
    <cofactor evidence="1">
        <name>thiamine diphosphate</name>
        <dbReference type="ChEBI" id="CHEBI:58937"/>
    </cofactor>
    <text evidence="1">Binds 1 thiamine pyrophosphate per subunit.</text>
</comment>
<comment type="pathway">
    <text evidence="1">Quinol/quinone metabolism; 1,4-dihydroxy-2-naphthoate biosynthesis; 1,4-dihydroxy-2-naphthoate from chorismate: step 2/7.</text>
</comment>
<comment type="pathway">
    <text evidence="1">Cofactor biosynthesis; phylloquinone biosynthesis.</text>
</comment>
<comment type="subunit">
    <text evidence="1">Homodimer.</text>
</comment>
<comment type="similarity">
    <text evidence="1">Belongs to the TPP enzyme family. MenD subfamily.</text>
</comment>
<gene>
    <name evidence="1" type="primary">menD</name>
    <name type="ordered locus">Tery_4077</name>
</gene>
<sequence>MSIDFRSLNTVWSSILVETLHHLGLTTAIISPGYRSTPLTFAFATHPKIETIPILDERSAAFFALGIAKKNYQPIVIVCTSGTAAANFYPAIIEAKESRIPLLVLTADRPPELRNCHAGQTIDQVKLYGNYPNWQIELTLPSVELKRLEYLRQTVIHGWEKTMFPTPGPVHFNIPFRDPLAPINQPEAIALESKFSQNFFASLRPIIRTELIPNSDLIELLKNQFKSHSGIIIAGLAQPEKPEVYCQAIAKISQTLNFPVLAEGLSPLRNYSQLNPYLISTYDLILRNQKLANKLIPKIVLQIGELPTSKQLRTWLEAANSHRLIIDQSDHNFDPLHGKTTHLRISVEQLAKILITQYFNNNHDINYLNLWCQAEEKVRENIDTKMAKINHILEPKISWLISQTLPKNTSIFVANSMPVRDVEFFWVPNNSQIQPFFNRGVNGIDGTLSTALGIAHRYQKTVMLTGDLALLHDTNGFLLRNKLVGHLTIILINNQGGGIFEMLPIANFEPPFTEFFATPQEIDFADLCKTYGLEHQKISSWNQLQQLLNPLPSSGIRILELQTDRQLDARWRLDNLDTFIDL</sequence>
<keyword id="KW-0460">Magnesium</keyword>
<keyword id="KW-0464">Manganese</keyword>
<keyword id="KW-0479">Metal-binding</keyword>
<keyword id="KW-0786">Thiamine pyrophosphate</keyword>
<keyword id="KW-0808">Transferase</keyword>
<name>MEND_TRIEI</name>
<organism>
    <name type="scientific">Trichodesmium erythraeum (strain IMS101)</name>
    <dbReference type="NCBI Taxonomy" id="203124"/>
    <lineage>
        <taxon>Bacteria</taxon>
        <taxon>Bacillati</taxon>
        <taxon>Cyanobacteriota</taxon>
        <taxon>Cyanophyceae</taxon>
        <taxon>Oscillatoriophycideae</taxon>
        <taxon>Oscillatoriales</taxon>
        <taxon>Microcoleaceae</taxon>
        <taxon>Trichodesmium</taxon>
    </lineage>
</organism>
<reference key="1">
    <citation type="journal article" date="2015" name="Proc. Natl. Acad. Sci. U.S.A.">
        <title>Trichodesmium genome maintains abundant, widespread noncoding DNA in situ, despite oligotrophic lifestyle.</title>
        <authorList>
            <person name="Walworth N."/>
            <person name="Pfreundt U."/>
            <person name="Nelson W.C."/>
            <person name="Mincer T."/>
            <person name="Heidelberg J.F."/>
            <person name="Fu F."/>
            <person name="Waterbury J.B."/>
            <person name="Glavina del Rio T."/>
            <person name="Goodwin L."/>
            <person name="Kyrpides N.C."/>
            <person name="Land M.L."/>
            <person name="Woyke T."/>
            <person name="Hutchins D.A."/>
            <person name="Hess W.R."/>
            <person name="Webb E.A."/>
        </authorList>
    </citation>
    <scope>NUCLEOTIDE SEQUENCE [LARGE SCALE GENOMIC DNA]</scope>
    <source>
        <strain>IMS101</strain>
    </source>
</reference>
<evidence type="ECO:0000255" key="1">
    <source>
        <dbReference type="HAMAP-Rule" id="MF_01659"/>
    </source>
</evidence>